<sequence>MSNQVFQFPPYYHKEPFFTIQPILNTRKKQFQMWQDLILQYCRYYKIYELDINESIKSNSVLFNNEKINRKLSREALKSIIDDIIENGFAEWVDKEKEKEKEKDKDNNNNNRVLIMWRKPDEWASLIYKWVADCGLLNTVLTVWEIQNGDDSKKQEFHQLNTTILMKSLKVLEKQSKCQTFSQDENVGVKFFSI</sequence>
<organism>
    <name type="scientific">Dictyostelium discoideum</name>
    <name type="common">Social amoeba</name>
    <dbReference type="NCBI Taxonomy" id="44689"/>
    <lineage>
        <taxon>Eukaryota</taxon>
        <taxon>Amoebozoa</taxon>
        <taxon>Evosea</taxon>
        <taxon>Eumycetozoa</taxon>
        <taxon>Dictyostelia</taxon>
        <taxon>Dictyosteliales</taxon>
        <taxon>Dictyosteliaceae</taxon>
        <taxon>Dictyostelium</taxon>
    </lineage>
</organism>
<keyword id="KW-0963">Cytoplasm</keyword>
<keyword id="KW-0653">Protein transport</keyword>
<keyword id="KW-1185">Reference proteome</keyword>
<keyword id="KW-0813">Transport</keyword>
<gene>
    <name type="primary">vps25</name>
    <name type="ORF">DDB_G0267708</name>
</gene>
<proteinExistence type="evidence at protein level"/>
<evidence type="ECO:0000250" key="1"/>
<evidence type="ECO:0000305" key="2"/>
<name>VPS25_DICDI</name>
<reference key="1">
    <citation type="journal article" date="2005" name="Nature">
        <title>The genome of the social amoeba Dictyostelium discoideum.</title>
        <authorList>
            <person name="Eichinger L."/>
            <person name="Pachebat J.A."/>
            <person name="Gloeckner G."/>
            <person name="Rajandream M.A."/>
            <person name="Sucgang R."/>
            <person name="Berriman M."/>
            <person name="Song J."/>
            <person name="Olsen R."/>
            <person name="Szafranski K."/>
            <person name="Xu Q."/>
            <person name="Tunggal B."/>
            <person name="Kummerfeld S."/>
            <person name="Madera M."/>
            <person name="Konfortov B.A."/>
            <person name="Rivero F."/>
            <person name="Bankier A.T."/>
            <person name="Lehmann R."/>
            <person name="Hamlin N."/>
            <person name="Davies R."/>
            <person name="Gaudet P."/>
            <person name="Fey P."/>
            <person name="Pilcher K."/>
            <person name="Chen G."/>
            <person name="Saunders D."/>
            <person name="Sodergren E.J."/>
            <person name="Davis P."/>
            <person name="Kerhornou A."/>
            <person name="Nie X."/>
            <person name="Hall N."/>
            <person name="Anjard C."/>
            <person name="Hemphill L."/>
            <person name="Bason N."/>
            <person name="Farbrother P."/>
            <person name="Desany B."/>
            <person name="Just E."/>
            <person name="Morio T."/>
            <person name="Rost R."/>
            <person name="Churcher C.M."/>
            <person name="Cooper J."/>
            <person name="Haydock S."/>
            <person name="van Driessche N."/>
            <person name="Cronin A."/>
            <person name="Goodhead I."/>
            <person name="Muzny D.M."/>
            <person name="Mourier T."/>
            <person name="Pain A."/>
            <person name="Lu M."/>
            <person name="Harper D."/>
            <person name="Lindsay R."/>
            <person name="Hauser H."/>
            <person name="James K.D."/>
            <person name="Quiles M."/>
            <person name="Madan Babu M."/>
            <person name="Saito T."/>
            <person name="Buchrieser C."/>
            <person name="Wardroper A."/>
            <person name="Felder M."/>
            <person name="Thangavelu M."/>
            <person name="Johnson D."/>
            <person name="Knights A."/>
            <person name="Loulseged H."/>
            <person name="Mungall K.L."/>
            <person name="Oliver K."/>
            <person name="Price C."/>
            <person name="Quail M.A."/>
            <person name="Urushihara H."/>
            <person name="Hernandez J."/>
            <person name="Rabbinowitsch E."/>
            <person name="Steffen D."/>
            <person name="Sanders M."/>
            <person name="Ma J."/>
            <person name="Kohara Y."/>
            <person name="Sharp S."/>
            <person name="Simmonds M.N."/>
            <person name="Spiegler S."/>
            <person name="Tivey A."/>
            <person name="Sugano S."/>
            <person name="White B."/>
            <person name="Walker D."/>
            <person name="Woodward J.R."/>
            <person name="Winckler T."/>
            <person name="Tanaka Y."/>
            <person name="Shaulsky G."/>
            <person name="Schleicher M."/>
            <person name="Weinstock G.M."/>
            <person name="Rosenthal A."/>
            <person name="Cox E.C."/>
            <person name="Chisholm R.L."/>
            <person name="Gibbs R.A."/>
            <person name="Loomis W.F."/>
            <person name="Platzer M."/>
            <person name="Kay R.R."/>
            <person name="Williams J.G."/>
            <person name="Dear P.H."/>
            <person name="Noegel A.A."/>
            <person name="Barrell B.G."/>
            <person name="Kuspa A."/>
        </authorList>
    </citation>
    <scope>NUCLEOTIDE SEQUENCE [LARGE SCALE GENOMIC DNA]</scope>
    <source>
        <strain>AX4</strain>
    </source>
</reference>
<reference key="2">
    <citation type="journal article" date="2006" name="Mol. Cell. Proteomics">
        <title>Proteomics fingerprinting of phagosome maturation and evidence for the role of a Galpha during uptake.</title>
        <authorList>
            <person name="Gotthardt D."/>
            <person name="Blancheteau V."/>
            <person name="Bosserhoff A."/>
            <person name="Ruppert T."/>
            <person name="Delorenzi M."/>
            <person name="Soldati T."/>
        </authorList>
    </citation>
    <scope>IDENTIFICATION BY MASS SPECTROMETRY [LARGE SCALE ANALYSIS]</scope>
    <source>
        <strain>AX2</strain>
    </source>
</reference>
<comment type="function">
    <text evidence="1">Component of the ESCRT-II complex (endosomal sorting complex required for transport II), which is required for multivesicular body (MVB) formation and sorting of endosomal cargo proteins into MVBs. The MVB pathway mediates delivery of transmembrane proteins into the lumen of the lysosome for degradation (By similarity).</text>
</comment>
<comment type="subunit">
    <text evidence="1">Component of the endosomal sorting complex required for transport II (ESCRT-II).</text>
</comment>
<comment type="subcellular location">
    <subcellularLocation>
        <location evidence="1">Cytoplasm</location>
    </subcellularLocation>
</comment>
<comment type="similarity">
    <text evidence="2">Belongs to the VPS25 family.</text>
</comment>
<accession>Q55GD9</accession>
<dbReference type="EMBL" id="AAFI02000003">
    <property type="protein sequence ID" value="EAL73307.1"/>
    <property type="molecule type" value="Genomic_DNA"/>
</dbReference>
<dbReference type="RefSeq" id="XP_647245.1">
    <property type="nucleotide sequence ID" value="XM_642153.1"/>
</dbReference>
<dbReference type="SMR" id="Q55GD9"/>
<dbReference type="FunCoup" id="Q55GD9">
    <property type="interactions" value="808"/>
</dbReference>
<dbReference type="STRING" id="44689.Q55GD9"/>
<dbReference type="PaxDb" id="44689-DDB0234026"/>
<dbReference type="EnsemblProtists" id="EAL73307">
    <property type="protein sequence ID" value="EAL73307"/>
    <property type="gene ID" value="DDB_G0267708"/>
</dbReference>
<dbReference type="GeneID" id="8616050"/>
<dbReference type="KEGG" id="ddi:DDB_G0267708"/>
<dbReference type="dictyBase" id="DDB_G0267708">
    <property type="gene designation" value="vps25"/>
</dbReference>
<dbReference type="VEuPathDB" id="AmoebaDB:DDB_G0267708"/>
<dbReference type="eggNOG" id="KOG4068">
    <property type="taxonomic scope" value="Eukaryota"/>
</dbReference>
<dbReference type="HOGENOM" id="CLU_087657_0_1_1"/>
<dbReference type="InParanoid" id="Q55GD9"/>
<dbReference type="OMA" id="TRCLIMW"/>
<dbReference type="PhylomeDB" id="Q55GD9"/>
<dbReference type="Reactome" id="R-DDI-917729">
    <property type="pathway name" value="Endosomal Sorting Complex Required For Transport (ESCRT)"/>
</dbReference>
<dbReference type="PRO" id="PR:Q55GD9"/>
<dbReference type="Proteomes" id="UP000002195">
    <property type="component" value="Chromosome 1"/>
</dbReference>
<dbReference type="GO" id="GO:0000814">
    <property type="term" value="C:ESCRT II complex"/>
    <property type="evidence" value="ECO:0000250"/>
    <property type="project" value="dictyBase"/>
</dbReference>
<dbReference type="GO" id="GO:0045335">
    <property type="term" value="C:phagocytic vesicle"/>
    <property type="evidence" value="ECO:0007005"/>
    <property type="project" value="dictyBase"/>
</dbReference>
<dbReference type="GO" id="GO:0042803">
    <property type="term" value="F:protein homodimerization activity"/>
    <property type="evidence" value="ECO:0000318"/>
    <property type="project" value="GO_Central"/>
</dbReference>
<dbReference type="GO" id="GO:0005198">
    <property type="term" value="F:structural molecule activity"/>
    <property type="evidence" value="ECO:0000318"/>
    <property type="project" value="GO_Central"/>
</dbReference>
<dbReference type="GO" id="GO:0006605">
    <property type="term" value="P:protein targeting"/>
    <property type="evidence" value="ECO:0000250"/>
    <property type="project" value="dictyBase"/>
</dbReference>
<dbReference type="GO" id="GO:0043328">
    <property type="term" value="P:protein transport to vacuole involved in ubiquitin-dependent protein catabolic process via the multivesicular body sorting pathway"/>
    <property type="evidence" value="ECO:0000318"/>
    <property type="project" value="GO_Central"/>
</dbReference>
<dbReference type="FunFam" id="1.10.10.570:FF:000003">
    <property type="entry name" value="Vacuolar protein-sorting-associated protein 25"/>
    <property type="match status" value="1"/>
</dbReference>
<dbReference type="FunFam" id="1.10.10.10:FF:000141">
    <property type="entry name" value="vacuolar protein-sorting-associated protein 25"/>
    <property type="match status" value="1"/>
</dbReference>
<dbReference type="Gene3D" id="1.10.10.570">
    <property type="entry name" value="Winged helix' DNA-binding domain. Chain C. Domain 1"/>
    <property type="match status" value="1"/>
</dbReference>
<dbReference type="Gene3D" id="1.10.10.10">
    <property type="entry name" value="Winged helix-like DNA-binding domain superfamily/Winged helix DNA-binding domain"/>
    <property type="match status" value="1"/>
</dbReference>
<dbReference type="InterPro" id="IPR008570">
    <property type="entry name" value="ESCRT-II_cplx_Vps25-sub"/>
</dbReference>
<dbReference type="InterPro" id="IPR014041">
    <property type="entry name" value="ESCRT-II_cplx_Vps25-sub_N"/>
</dbReference>
<dbReference type="InterPro" id="IPR036388">
    <property type="entry name" value="WH-like_DNA-bd_sf"/>
</dbReference>
<dbReference type="InterPro" id="IPR036390">
    <property type="entry name" value="WH_DNA-bd_sf"/>
</dbReference>
<dbReference type="PANTHER" id="PTHR13149">
    <property type="entry name" value="VACUOLAR PROTEIN SORTING-ASSOCIATED PROTEIN VPS25"/>
    <property type="match status" value="1"/>
</dbReference>
<dbReference type="PANTHER" id="PTHR13149:SF0">
    <property type="entry name" value="VACUOLAR PROTEIN-SORTING-ASSOCIATED PROTEIN 25"/>
    <property type="match status" value="1"/>
</dbReference>
<dbReference type="Pfam" id="PF05871">
    <property type="entry name" value="ESCRT-II"/>
    <property type="match status" value="1"/>
</dbReference>
<dbReference type="SUPFAM" id="SSF46785">
    <property type="entry name" value="Winged helix' DNA-binding domain"/>
    <property type="match status" value="2"/>
</dbReference>
<protein>
    <recommendedName>
        <fullName>Vacuolar protein-sorting-associated protein 25</fullName>
    </recommendedName>
    <alternativeName>
        <fullName>ESCRT-II complex subunit VPS25</fullName>
    </alternativeName>
</protein>
<feature type="chain" id="PRO_0000328263" description="Vacuolar protein-sorting-associated protein 25">
    <location>
        <begin position="1"/>
        <end position="194"/>
    </location>
</feature>